<evidence type="ECO:0000255" key="1">
    <source>
        <dbReference type="HAMAP-Rule" id="MF_01328"/>
    </source>
</evidence>
<evidence type="ECO:0000256" key="2">
    <source>
        <dbReference type="SAM" id="MobiDB-lite"/>
    </source>
</evidence>
<evidence type="ECO:0000305" key="3"/>
<feature type="chain" id="PRO_0000129289" description="Large ribosomal subunit protein uL4">
    <location>
        <begin position="1"/>
        <end position="207"/>
    </location>
</feature>
<feature type="region of interest" description="Disordered" evidence="2">
    <location>
        <begin position="49"/>
        <end position="78"/>
    </location>
</feature>
<sequence>MANVTLFDQTGKEAGQVVLSDAVFGIEPNESVVFDVIISQRASLRQGTHAVKNRSAVSGGGRKPWRQKGTGRARQGSIRSPQWRGGGVVFGPTPRSYGYKLPQKVRRLALKSVYSEKVAENKFVAVDALSFTAPKTAEFAKVLAALSIDSKVLVILEEGNEFAALSARNLPNVKVATATTASVLDIANSDKLLVTQAAISKIEEVLA</sequence>
<organism>
    <name type="scientific">Streptococcus pneumoniae (strain ATCC BAA-255 / R6)</name>
    <dbReference type="NCBI Taxonomy" id="171101"/>
    <lineage>
        <taxon>Bacteria</taxon>
        <taxon>Bacillati</taxon>
        <taxon>Bacillota</taxon>
        <taxon>Bacilli</taxon>
        <taxon>Lactobacillales</taxon>
        <taxon>Streptococcaceae</taxon>
        <taxon>Streptococcus</taxon>
    </lineage>
</organism>
<comment type="function">
    <text evidence="1">One of the primary rRNA binding proteins, this protein initially binds near the 5'-end of the 23S rRNA. It is important during the early stages of 50S assembly. It makes multiple contacts with different domains of the 23S rRNA in the assembled 50S subunit and ribosome.</text>
</comment>
<comment type="function">
    <text evidence="1">Forms part of the polypeptide exit tunnel.</text>
</comment>
<comment type="subunit">
    <text evidence="1">Part of the 50S ribosomal subunit.</text>
</comment>
<comment type="similarity">
    <text evidence="1">Belongs to the universal ribosomal protein uL4 family.</text>
</comment>
<gene>
    <name evidence="1" type="primary">rplD</name>
    <name type="ordered locus">spr0189</name>
</gene>
<keyword id="KW-1185">Reference proteome</keyword>
<keyword id="KW-0687">Ribonucleoprotein</keyword>
<keyword id="KW-0689">Ribosomal protein</keyword>
<keyword id="KW-0694">RNA-binding</keyword>
<keyword id="KW-0699">rRNA-binding</keyword>
<reference key="1">
    <citation type="journal article" date="2001" name="J. Bacteriol.">
        <title>Genome of the bacterium Streptococcus pneumoniae strain R6.</title>
        <authorList>
            <person name="Hoskins J."/>
            <person name="Alborn W.E. Jr."/>
            <person name="Arnold J."/>
            <person name="Blaszczak L.C."/>
            <person name="Burgett S."/>
            <person name="DeHoff B.S."/>
            <person name="Estrem S.T."/>
            <person name="Fritz L."/>
            <person name="Fu D.-J."/>
            <person name="Fuller W."/>
            <person name="Geringer C."/>
            <person name="Gilmour R."/>
            <person name="Glass J.S."/>
            <person name="Khoja H."/>
            <person name="Kraft A.R."/>
            <person name="Lagace R.E."/>
            <person name="LeBlanc D.J."/>
            <person name="Lee L.N."/>
            <person name="Lefkowitz E.J."/>
            <person name="Lu J."/>
            <person name="Matsushima P."/>
            <person name="McAhren S.M."/>
            <person name="McHenney M."/>
            <person name="McLeaster K."/>
            <person name="Mundy C.W."/>
            <person name="Nicas T.I."/>
            <person name="Norris F.H."/>
            <person name="O'Gara M."/>
            <person name="Peery R.B."/>
            <person name="Robertson G.T."/>
            <person name="Rockey P."/>
            <person name="Sun P.-M."/>
            <person name="Winkler M.E."/>
            <person name="Yang Y."/>
            <person name="Young-Bellido M."/>
            <person name="Zhao G."/>
            <person name="Zook C.A."/>
            <person name="Baltz R.H."/>
            <person name="Jaskunas S.R."/>
            <person name="Rosteck P.R. Jr."/>
            <person name="Skatrud P.L."/>
            <person name="Glass J.I."/>
        </authorList>
    </citation>
    <scope>NUCLEOTIDE SEQUENCE [LARGE SCALE GENOMIC DNA]</scope>
    <source>
        <strain>ATCC BAA-255 / R6</strain>
    </source>
</reference>
<accession>Q8CWV7</accession>
<protein>
    <recommendedName>
        <fullName evidence="1">Large ribosomal subunit protein uL4</fullName>
    </recommendedName>
    <alternativeName>
        <fullName evidence="3">50S ribosomal protein L4</fullName>
    </alternativeName>
</protein>
<proteinExistence type="inferred from homology"/>
<dbReference type="EMBL" id="AE007317">
    <property type="protein sequence ID" value="AAK98993.1"/>
    <property type="molecule type" value="Genomic_DNA"/>
</dbReference>
<dbReference type="PIR" id="E95024">
    <property type="entry name" value="E95024"/>
</dbReference>
<dbReference type="PIR" id="E97895">
    <property type="entry name" value="E97895"/>
</dbReference>
<dbReference type="RefSeq" id="NP_357783.1">
    <property type="nucleotide sequence ID" value="NC_003098.1"/>
</dbReference>
<dbReference type="RefSeq" id="WP_000024543.1">
    <property type="nucleotide sequence ID" value="NC_003098.1"/>
</dbReference>
<dbReference type="SMR" id="Q8CWV7"/>
<dbReference type="STRING" id="171101.spr0189"/>
<dbReference type="GeneID" id="45652308"/>
<dbReference type="KEGG" id="spr:spr0189"/>
<dbReference type="PATRIC" id="fig|171101.6.peg.221"/>
<dbReference type="eggNOG" id="COG0088">
    <property type="taxonomic scope" value="Bacteria"/>
</dbReference>
<dbReference type="HOGENOM" id="CLU_041575_5_2_9"/>
<dbReference type="PRO" id="PR:Q8CWV7"/>
<dbReference type="Proteomes" id="UP000000586">
    <property type="component" value="Chromosome"/>
</dbReference>
<dbReference type="GO" id="GO:1990904">
    <property type="term" value="C:ribonucleoprotein complex"/>
    <property type="evidence" value="ECO:0007669"/>
    <property type="project" value="UniProtKB-KW"/>
</dbReference>
<dbReference type="GO" id="GO:0005840">
    <property type="term" value="C:ribosome"/>
    <property type="evidence" value="ECO:0007669"/>
    <property type="project" value="UniProtKB-KW"/>
</dbReference>
<dbReference type="GO" id="GO:0019843">
    <property type="term" value="F:rRNA binding"/>
    <property type="evidence" value="ECO:0007669"/>
    <property type="project" value="UniProtKB-UniRule"/>
</dbReference>
<dbReference type="GO" id="GO:0003735">
    <property type="term" value="F:structural constituent of ribosome"/>
    <property type="evidence" value="ECO:0000318"/>
    <property type="project" value="GO_Central"/>
</dbReference>
<dbReference type="GO" id="GO:0006412">
    <property type="term" value="P:translation"/>
    <property type="evidence" value="ECO:0007669"/>
    <property type="project" value="UniProtKB-UniRule"/>
</dbReference>
<dbReference type="FunFam" id="3.40.1370.10:FF:000003">
    <property type="entry name" value="50S ribosomal protein L4"/>
    <property type="match status" value="1"/>
</dbReference>
<dbReference type="Gene3D" id="3.40.1370.10">
    <property type="match status" value="1"/>
</dbReference>
<dbReference type="HAMAP" id="MF_01328_B">
    <property type="entry name" value="Ribosomal_uL4_B"/>
    <property type="match status" value="1"/>
</dbReference>
<dbReference type="InterPro" id="IPR002136">
    <property type="entry name" value="Ribosomal_uL4"/>
</dbReference>
<dbReference type="InterPro" id="IPR013005">
    <property type="entry name" value="Ribosomal_uL4-like"/>
</dbReference>
<dbReference type="InterPro" id="IPR023574">
    <property type="entry name" value="Ribosomal_uL4_dom_sf"/>
</dbReference>
<dbReference type="NCBIfam" id="TIGR03953">
    <property type="entry name" value="rplD_bact"/>
    <property type="match status" value="1"/>
</dbReference>
<dbReference type="PANTHER" id="PTHR10746">
    <property type="entry name" value="50S RIBOSOMAL PROTEIN L4"/>
    <property type="match status" value="1"/>
</dbReference>
<dbReference type="PANTHER" id="PTHR10746:SF6">
    <property type="entry name" value="LARGE RIBOSOMAL SUBUNIT PROTEIN UL4M"/>
    <property type="match status" value="1"/>
</dbReference>
<dbReference type="Pfam" id="PF00573">
    <property type="entry name" value="Ribosomal_L4"/>
    <property type="match status" value="1"/>
</dbReference>
<dbReference type="SUPFAM" id="SSF52166">
    <property type="entry name" value="Ribosomal protein L4"/>
    <property type="match status" value="1"/>
</dbReference>
<name>RL4_STRR6</name>